<keyword id="KW-0067">ATP-binding</keyword>
<keyword id="KW-0997">Cell inner membrane</keyword>
<keyword id="KW-1003">Cell membrane</keyword>
<keyword id="KW-0406">Ion transport</keyword>
<keyword id="KW-0472">Membrane</keyword>
<keyword id="KW-0533">Nickel</keyword>
<keyword id="KW-0921">Nickel transport</keyword>
<keyword id="KW-0547">Nucleotide-binding</keyword>
<keyword id="KW-1185">Reference proteome</keyword>
<keyword id="KW-1278">Translocase</keyword>
<keyword id="KW-0813">Transport</keyword>
<organism>
    <name type="scientific">Rhodospirillum rubrum (strain ATCC 11170 / ATH 1.1.1 / DSM 467 / LMG 4362 / NCIMB 8255 / S1)</name>
    <dbReference type="NCBI Taxonomy" id="269796"/>
    <lineage>
        <taxon>Bacteria</taxon>
        <taxon>Pseudomonadati</taxon>
        <taxon>Pseudomonadota</taxon>
        <taxon>Alphaproteobacteria</taxon>
        <taxon>Rhodospirillales</taxon>
        <taxon>Rhodospirillaceae</taxon>
        <taxon>Rhodospirillum</taxon>
    </lineage>
</organism>
<gene>
    <name evidence="1" type="primary">nikE</name>
    <name type="ordered locus">Rru_A2273</name>
</gene>
<sequence length="277" mass="30050">MSPLLTARAASKSYRTVSLVGRSPAKTVLSEATVTLSEGETVALLGRSGSGKSTLARLLLGLEKPDHGTIAFRGRPLGGFSRAEWRAFRGAVQMVFQDSLGAVNPRHRVGRIIGEPLRHLTTLDDAGRAARRDALLRQVGLTPEDADKLPQQMSGGQLQRVCIARALAPGPRLLVLDEAVSNLDLMLQIQMIDLLKDLQRQTGMAYLFVTHDLRLVERFCQRVIVLDEGKIVEEAPVTGAQRFEHPASRALQRAILPARPAAASVGDDEGGRRSATR</sequence>
<protein>
    <recommendedName>
        <fullName evidence="1">Nickel import ATP-binding protein NikE</fullName>
        <ecNumber evidence="1">7.2.2.11</ecNumber>
    </recommendedName>
</protein>
<evidence type="ECO:0000255" key="1">
    <source>
        <dbReference type="HAMAP-Rule" id="MF_01712"/>
    </source>
</evidence>
<dbReference type="EC" id="7.2.2.11" evidence="1"/>
<dbReference type="EMBL" id="CP000230">
    <property type="protein sequence ID" value="ABC23073.1"/>
    <property type="molecule type" value="Genomic_DNA"/>
</dbReference>
<dbReference type="RefSeq" id="WP_011389928.1">
    <property type="nucleotide sequence ID" value="NC_007643.1"/>
</dbReference>
<dbReference type="RefSeq" id="YP_427360.1">
    <property type="nucleotide sequence ID" value="NC_007643.1"/>
</dbReference>
<dbReference type="SMR" id="Q2RS22"/>
<dbReference type="STRING" id="269796.Rru_A2273"/>
<dbReference type="EnsemblBacteria" id="ABC23073">
    <property type="protein sequence ID" value="ABC23073"/>
    <property type="gene ID" value="Rru_A2273"/>
</dbReference>
<dbReference type="KEGG" id="rru:Rru_A2273"/>
<dbReference type="PATRIC" id="fig|269796.9.peg.2371"/>
<dbReference type="eggNOG" id="COG1124">
    <property type="taxonomic scope" value="Bacteria"/>
</dbReference>
<dbReference type="HOGENOM" id="CLU_000604_1_23_5"/>
<dbReference type="PhylomeDB" id="Q2RS22"/>
<dbReference type="Proteomes" id="UP000001929">
    <property type="component" value="Chromosome"/>
</dbReference>
<dbReference type="GO" id="GO:0005886">
    <property type="term" value="C:plasma membrane"/>
    <property type="evidence" value="ECO:0007669"/>
    <property type="project" value="UniProtKB-SubCell"/>
</dbReference>
<dbReference type="GO" id="GO:0015413">
    <property type="term" value="F:ABC-type nickel transporter activity"/>
    <property type="evidence" value="ECO:0007669"/>
    <property type="project" value="UniProtKB-EC"/>
</dbReference>
<dbReference type="GO" id="GO:0005524">
    <property type="term" value="F:ATP binding"/>
    <property type="evidence" value="ECO:0007669"/>
    <property type="project" value="UniProtKB-KW"/>
</dbReference>
<dbReference type="GO" id="GO:0016887">
    <property type="term" value="F:ATP hydrolysis activity"/>
    <property type="evidence" value="ECO:0007669"/>
    <property type="project" value="InterPro"/>
</dbReference>
<dbReference type="GO" id="GO:0016151">
    <property type="term" value="F:nickel cation binding"/>
    <property type="evidence" value="ECO:0007669"/>
    <property type="project" value="InterPro"/>
</dbReference>
<dbReference type="CDD" id="cd03257">
    <property type="entry name" value="ABC_NikE_OppD_transporters"/>
    <property type="match status" value="1"/>
</dbReference>
<dbReference type="Gene3D" id="3.40.50.300">
    <property type="entry name" value="P-loop containing nucleotide triphosphate hydrolases"/>
    <property type="match status" value="1"/>
</dbReference>
<dbReference type="InterPro" id="IPR003593">
    <property type="entry name" value="AAA+_ATPase"/>
</dbReference>
<dbReference type="InterPro" id="IPR050319">
    <property type="entry name" value="ABC_transp_ATP-bind"/>
</dbReference>
<dbReference type="InterPro" id="IPR003439">
    <property type="entry name" value="ABC_transporter-like_ATP-bd"/>
</dbReference>
<dbReference type="InterPro" id="IPR017871">
    <property type="entry name" value="ABC_transporter-like_CS"/>
</dbReference>
<dbReference type="InterPro" id="IPR014137">
    <property type="entry name" value="Nickel_NikE"/>
</dbReference>
<dbReference type="InterPro" id="IPR027417">
    <property type="entry name" value="P-loop_NTPase"/>
</dbReference>
<dbReference type="NCBIfam" id="TIGR02769">
    <property type="entry name" value="nickel_nikE"/>
    <property type="match status" value="1"/>
</dbReference>
<dbReference type="NCBIfam" id="NF007739">
    <property type="entry name" value="PRK10419.1"/>
    <property type="match status" value="1"/>
</dbReference>
<dbReference type="PANTHER" id="PTHR43776:SF7">
    <property type="entry name" value="D,D-DIPEPTIDE TRANSPORT ATP-BINDING PROTEIN DDPF-RELATED"/>
    <property type="match status" value="1"/>
</dbReference>
<dbReference type="PANTHER" id="PTHR43776">
    <property type="entry name" value="TRANSPORT ATP-BINDING PROTEIN"/>
    <property type="match status" value="1"/>
</dbReference>
<dbReference type="Pfam" id="PF00005">
    <property type="entry name" value="ABC_tran"/>
    <property type="match status" value="1"/>
</dbReference>
<dbReference type="SMART" id="SM00382">
    <property type="entry name" value="AAA"/>
    <property type="match status" value="1"/>
</dbReference>
<dbReference type="SUPFAM" id="SSF52540">
    <property type="entry name" value="P-loop containing nucleoside triphosphate hydrolases"/>
    <property type="match status" value="1"/>
</dbReference>
<dbReference type="PROSITE" id="PS00211">
    <property type="entry name" value="ABC_TRANSPORTER_1"/>
    <property type="match status" value="1"/>
</dbReference>
<dbReference type="PROSITE" id="PS50893">
    <property type="entry name" value="ABC_TRANSPORTER_2"/>
    <property type="match status" value="1"/>
</dbReference>
<dbReference type="PROSITE" id="PS51248">
    <property type="entry name" value="NIKE"/>
    <property type="match status" value="1"/>
</dbReference>
<reference key="1">
    <citation type="journal article" date="2011" name="Stand. Genomic Sci.">
        <title>Complete genome sequence of Rhodospirillum rubrum type strain (S1).</title>
        <authorList>
            <person name="Munk A.C."/>
            <person name="Copeland A."/>
            <person name="Lucas S."/>
            <person name="Lapidus A."/>
            <person name="Del Rio T.G."/>
            <person name="Barry K."/>
            <person name="Detter J.C."/>
            <person name="Hammon N."/>
            <person name="Israni S."/>
            <person name="Pitluck S."/>
            <person name="Brettin T."/>
            <person name="Bruce D."/>
            <person name="Han C."/>
            <person name="Tapia R."/>
            <person name="Gilna P."/>
            <person name="Schmutz J."/>
            <person name="Larimer F."/>
            <person name="Land M."/>
            <person name="Kyrpides N.C."/>
            <person name="Mavromatis K."/>
            <person name="Richardson P."/>
            <person name="Rohde M."/>
            <person name="Goeker M."/>
            <person name="Klenk H.P."/>
            <person name="Zhang Y."/>
            <person name="Roberts G.P."/>
            <person name="Reslewic S."/>
            <person name="Schwartz D.C."/>
        </authorList>
    </citation>
    <scope>NUCLEOTIDE SEQUENCE [LARGE SCALE GENOMIC DNA]</scope>
    <source>
        <strain>ATCC 11170 / ATH 1.1.1 / DSM 467 / LMG 4362 / NCIMB 8255 / S1</strain>
    </source>
</reference>
<feature type="chain" id="PRO_0000274122" description="Nickel import ATP-binding protein NikE">
    <location>
        <begin position="1"/>
        <end position="277"/>
    </location>
</feature>
<feature type="domain" description="ABC transporter" evidence="1">
    <location>
        <begin position="14"/>
        <end position="253"/>
    </location>
</feature>
<feature type="binding site" evidence="1">
    <location>
        <begin position="46"/>
        <end position="53"/>
    </location>
    <ligand>
        <name>ATP</name>
        <dbReference type="ChEBI" id="CHEBI:30616"/>
    </ligand>
</feature>
<accession>Q2RS22</accession>
<comment type="function">
    <text evidence="1">Part of the ABC transporter complex NikABCDE involved in nickel import. Responsible for energy coupling to the transport system.</text>
</comment>
<comment type="catalytic activity">
    <reaction evidence="1">
        <text>Ni(2+)(out) + ATP + H2O = Ni(2+)(in) + ADP + phosphate + H(+)</text>
        <dbReference type="Rhea" id="RHEA:15557"/>
        <dbReference type="ChEBI" id="CHEBI:15377"/>
        <dbReference type="ChEBI" id="CHEBI:15378"/>
        <dbReference type="ChEBI" id="CHEBI:30616"/>
        <dbReference type="ChEBI" id="CHEBI:43474"/>
        <dbReference type="ChEBI" id="CHEBI:49786"/>
        <dbReference type="ChEBI" id="CHEBI:456216"/>
        <dbReference type="EC" id="7.2.2.11"/>
    </reaction>
</comment>
<comment type="subunit">
    <text evidence="1">The complex is composed of two ATP-binding proteins (NikD and NikE), two transmembrane proteins (NikB and NikC) and a solute-binding protein (NikA).</text>
</comment>
<comment type="subcellular location">
    <subcellularLocation>
        <location evidence="1">Cell inner membrane</location>
        <topology evidence="1">Peripheral membrane protein</topology>
    </subcellularLocation>
</comment>
<comment type="similarity">
    <text evidence="1">Belongs to the ABC transporter superfamily. Nickel importer (TC 3.A.1.5.3) family.</text>
</comment>
<proteinExistence type="inferred from homology"/>
<name>NIKE_RHORT</name>